<gene>
    <name evidence="1" type="primary">trpD</name>
    <name type="ordered locus">Bind_1444</name>
</gene>
<dbReference type="EC" id="2.4.2.18" evidence="1"/>
<dbReference type="EMBL" id="CP001016">
    <property type="protein sequence ID" value="ACB95083.1"/>
    <property type="molecule type" value="Genomic_DNA"/>
</dbReference>
<dbReference type="RefSeq" id="WP_012384440.1">
    <property type="nucleotide sequence ID" value="NC_010581.1"/>
</dbReference>
<dbReference type="SMR" id="B2IKP4"/>
<dbReference type="STRING" id="395963.Bind_1444"/>
<dbReference type="KEGG" id="bid:Bind_1444"/>
<dbReference type="eggNOG" id="COG0547">
    <property type="taxonomic scope" value="Bacteria"/>
</dbReference>
<dbReference type="HOGENOM" id="CLU_034315_2_1_5"/>
<dbReference type="OrthoDB" id="9806430at2"/>
<dbReference type="UniPathway" id="UPA00035">
    <property type="reaction ID" value="UER00041"/>
</dbReference>
<dbReference type="Proteomes" id="UP000001695">
    <property type="component" value="Chromosome"/>
</dbReference>
<dbReference type="GO" id="GO:0005829">
    <property type="term" value="C:cytosol"/>
    <property type="evidence" value="ECO:0007669"/>
    <property type="project" value="TreeGrafter"/>
</dbReference>
<dbReference type="GO" id="GO:0004048">
    <property type="term" value="F:anthranilate phosphoribosyltransferase activity"/>
    <property type="evidence" value="ECO:0007669"/>
    <property type="project" value="UniProtKB-UniRule"/>
</dbReference>
<dbReference type="GO" id="GO:0000287">
    <property type="term" value="F:magnesium ion binding"/>
    <property type="evidence" value="ECO:0007669"/>
    <property type="project" value="UniProtKB-UniRule"/>
</dbReference>
<dbReference type="GO" id="GO:0000162">
    <property type="term" value="P:L-tryptophan biosynthetic process"/>
    <property type="evidence" value="ECO:0007669"/>
    <property type="project" value="UniProtKB-UniRule"/>
</dbReference>
<dbReference type="FunFam" id="3.40.1030.10:FF:000002">
    <property type="entry name" value="Anthranilate phosphoribosyltransferase"/>
    <property type="match status" value="1"/>
</dbReference>
<dbReference type="Gene3D" id="3.40.1030.10">
    <property type="entry name" value="Nucleoside phosphorylase/phosphoribosyltransferase catalytic domain"/>
    <property type="match status" value="1"/>
</dbReference>
<dbReference type="Gene3D" id="1.20.970.10">
    <property type="entry name" value="Transferase, Pyrimidine Nucleoside Phosphorylase, Chain C"/>
    <property type="match status" value="1"/>
</dbReference>
<dbReference type="HAMAP" id="MF_00211">
    <property type="entry name" value="TrpD"/>
    <property type="match status" value="1"/>
</dbReference>
<dbReference type="InterPro" id="IPR005940">
    <property type="entry name" value="Anthranilate_Pribosyl_Tfrase"/>
</dbReference>
<dbReference type="InterPro" id="IPR000312">
    <property type="entry name" value="Glycosyl_Trfase_fam3"/>
</dbReference>
<dbReference type="InterPro" id="IPR017459">
    <property type="entry name" value="Glycosyl_Trfase_fam3_N_dom"/>
</dbReference>
<dbReference type="InterPro" id="IPR036320">
    <property type="entry name" value="Glycosyl_Trfase_fam3_N_dom_sf"/>
</dbReference>
<dbReference type="InterPro" id="IPR035902">
    <property type="entry name" value="Nuc_phospho_transferase"/>
</dbReference>
<dbReference type="NCBIfam" id="TIGR01245">
    <property type="entry name" value="trpD"/>
    <property type="match status" value="1"/>
</dbReference>
<dbReference type="PANTHER" id="PTHR43285">
    <property type="entry name" value="ANTHRANILATE PHOSPHORIBOSYLTRANSFERASE"/>
    <property type="match status" value="1"/>
</dbReference>
<dbReference type="PANTHER" id="PTHR43285:SF2">
    <property type="entry name" value="ANTHRANILATE PHOSPHORIBOSYLTRANSFERASE"/>
    <property type="match status" value="1"/>
</dbReference>
<dbReference type="Pfam" id="PF02885">
    <property type="entry name" value="Glycos_trans_3N"/>
    <property type="match status" value="1"/>
</dbReference>
<dbReference type="Pfam" id="PF00591">
    <property type="entry name" value="Glycos_transf_3"/>
    <property type="match status" value="1"/>
</dbReference>
<dbReference type="SUPFAM" id="SSF52418">
    <property type="entry name" value="Nucleoside phosphorylase/phosphoribosyltransferase catalytic domain"/>
    <property type="match status" value="1"/>
</dbReference>
<dbReference type="SUPFAM" id="SSF47648">
    <property type="entry name" value="Nucleoside phosphorylase/phosphoribosyltransferase N-terminal domain"/>
    <property type="match status" value="1"/>
</dbReference>
<organism>
    <name type="scientific">Beijerinckia indica subsp. indica (strain ATCC 9039 / DSM 1715 / NCIMB 8712)</name>
    <dbReference type="NCBI Taxonomy" id="395963"/>
    <lineage>
        <taxon>Bacteria</taxon>
        <taxon>Pseudomonadati</taxon>
        <taxon>Pseudomonadota</taxon>
        <taxon>Alphaproteobacteria</taxon>
        <taxon>Hyphomicrobiales</taxon>
        <taxon>Beijerinckiaceae</taxon>
        <taxon>Beijerinckia</taxon>
    </lineage>
</organism>
<name>TRPD_BEII9</name>
<accession>B2IKP4</accession>
<keyword id="KW-0028">Amino-acid biosynthesis</keyword>
<keyword id="KW-0057">Aromatic amino acid biosynthesis</keyword>
<keyword id="KW-0328">Glycosyltransferase</keyword>
<keyword id="KW-0460">Magnesium</keyword>
<keyword id="KW-0479">Metal-binding</keyword>
<keyword id="KW-1185">Reference proteome</keyword>
<keyword id="KW-0808">Transferase</keyword>
<keyword id="KW-0822">Tryptophan biosynthesis</keyword>
<evidence type="ECO:0000255" key="1">
    <source>
        <dbReference type="HAMAP-Rule" id="MF_00211"/>
    </source>
</evidence>
<sequence>MDQFKPFIAKLATGSSLTRAEAEAAFDQIFAGEVTPAQLGGFLMAMRVRGETVDEIIGAVTAMRARMVRVDAPTDAIDIVGTGGDGHGTFNVSTLASLIVAACGVPVAKHGNRAASSRSGASDVLSALGVRTGLDSAGVEACIRGAGIGFMMAQTHHTAMRHVASARVELGTRTIFNLLGPLCNPAGVTRQLLGVFSQAWLEPLAQVLQALGGKHVWVVHGSDGLDELTTTGPSFVTALEDGAIRSFTITPEMAGLPQATLADLKGGDPETNAAALREALGGKKSAYRDIALLNAAAALVIAAKAKDLKEGVLIGAKAVDSGAASAVLAKLVALSNQDNRAA</sequence>
<reference key="1">
    <citation type="journal article" date="2010" name="J. Bacteriol.">
        <title>Complete genome sequence of Beijerinckia indica subsp. indica.</title>
        <authorList>
            <person name="Tamas I."/>
            <person name="Dedysh S.N."/>
            <person name="Liesack W."/>
            <person name="Stott M.B."/>
            <person name="Alam M."/>
            <person name="Murrell J.C."/>
            <person name="Dunfield P.F."/>
        </authorList>
    </citation>
    <scope>NUCLEOTIDE SEQUENCE [LARGE SCALE GENOMIC DNA]</scope>
    <source>
        <strain>ATCC 9039 / DSM 1715 / NCIMB 8712</strain>
    </source>
</reference>
<feature type="chain" id="PRO_1000099783" description="Anthranilate phosphoribosyltransferase">
    <location>
        <begin position="1"/>
        <end position="342"/>
    </location>
</feature>
<feature type="binding site" evidence="1">
    <location>
        <position position="81"/>
    </location>
    <ligand>
        <name>5-phospho-alpha-D-ribose 1-diphosphate</name>
        <dbReference type="ChEBI" id="CHEBI:58017"/>
    </ligand>
</feature>
<feature type="binding site" evidence="1">
    <location>
        <position position="81"/>
    </location>
    <ligand>
        <name>anthranilate</name>
        <dbReference type="ChEBI" id="CHEBI:16567"/>
        <label>1</label>
    </ligand>
</feature>
<feature type="binding site" evidence="1">
    <location>
        <begin position="84"/>
        <end position="85"/>
    </location>
    <ligand>
        <name>5-phospho-alpha-D-ribose 1-diphosphate</name>
        <dbReference type="ChEBI" id="CHEBI:58017"/>
    </ligand>
</feature>
<feature type="binding site" evidence="1">
    <location>
        <position position="89"/>
    </location>
    <ligand>
        <name>5-phospho-alpha-D-ribose 1-diphosphate</name>
        <dbReference type="ChEBI" id="CHEBI:58017"/>
    </ligand>
</feature>
<feature type="binding site" evidence="1">
    <location>
        <begin position="91"/>
        <end position="94"/>
    </location>
    <ligand>
        <name>5-phospho-alpha-D-ribose 1-diphosphate</name>
        <dbReference type="ChEBI" id="CHEBI:58017"/>
    </ligand>
</feature>
<feature type="binding site" evidence="1">
    <location>
        <position position="93"/>
    </location>
    <ligand>
        <name>Mg(2+)</name>
        <dbReference type="ChEBI" id="CHEBI:18420"/>
        <label>1</label>
    </ligand>
</feature>
<feature type="binding site" evidence="1">
    <location>
        <begin position="109"/>
        <end position="117"/>
    </location>
    <ligand>
        <name>5-phospho-alpha-D-ribose 1-diphosphate</name>
        <dbReference type="ChEBI" id="CHEBI:58017"/>
    </ligand>
</feature>
<feature type="binding site" evidence="1">
    <location>
        <position position="112"/>
    </location>
    <ligand>
        <name>anthranilate</name>
        <dbReference type="ChEBI" id="CHEBI:16567"/>
        <label>1</label>
    </ligand>
</feature>
<feature type="binding site" evidence="1">
    <location>
        <position position="121"/>
    </location>
    <ligand>
        <name>5-phospho-alpha-D-ribose 1-diphosphate</name>
        <dbReference type="ChEBI" id="CHEBI:58017"/>
    </ligand>
</feature>
<feature type="binding site" evidence="1">
    <location>
        <position position="167"/>
    </location>
    <ligand>
        <name>anthranilate</name>
        <dbReference type="ChEBI" id="CHEBI:16567"/>
        <label>2</label>
    </ligand>
</feature>
<feature type="binding site" evidence="1">
    <location>
        <position position="226"/>
    </location>
    <ligand>
        <name>Mg(2+)</name>
        <dbReference type="ChEBI" id="CHEBI:18420"/>
        <label>2</label>
    </ligand>
</feature>
<feature type="binding site" evidence="1">
    <location>
        <position position="227"/>
    </location>
    <ligand>
        <name>Mg(2+)</name>
        <dbReference type="ChEBI" id="CHEBI:18420"/>
        <label>1</label>
    </ligand>
</feature>
<feature type="binding site" evidence="1">
    <location>
        <position position="227"/>
    </location>
    <ligand>
        <name>Mg(2+)</name>
        <dbReference type="ChEBI" id="CHEBI:18420"/>
        <label>2</label>
    </ligand>
</feature>
<proteinExistence type="inferred from homology"/>
<comment type="function">
    <text evidence="1">Catalyzes the transfer of the phosphoribosyl group of 5-phosphorylribose-1-pyrophosphate (PRPP) to anthranilate to yield N-(5'-phosphoribosyl)-anthranilate (PRA).</text>
</comment>
<comment type="catalytic activity">
    <reaction evidence="1">
        <text>N-(5-phospho-beta-D-ribosyl)anthranilate + diphosphate = 5-phospho-alpha-D-ribose 1-diphosphate + anthranilate</text>
        <dbReference type="Rhea" id="RHEA:11768"/>
        <dbReference type="ChEBI" id="CHEBI:16567"/>
        <dbReference type="ChEBI" id="CHEBI:18277"/>
        <dbReference type="ChEBI" id="CHEBI:33019"/>
        <dbReference type="ChEBI" id="CHEBI:58017"/>
        <dbReference type="EC" id="2.4.2.18"/>
    </reaction>
</comment>
<comment type="cofactor">
    <cofactor evidence="1">
        <name>Mg(2+)</name>
        <dbReference type="ChEBI" id="CHEBI:18420"/>
    </cofactor>
    <text evidence="1">Binds 2 magnesium ions per monomer.</text>
</comment>
<comment type="pathway">
    <text evidence="1">Amino-acid biosynthesis; L-tryptophan biosynthesis; L-tryptophan from chorismate: step 2/5.</text>
</comment>
<comment type="subunit">
    <text evidence="1">Homodimer.</text>
</comment>
<comment type="similarity">
    <text evidence="1">Belongs to the anthranilate phosphoribosyltransferase family.</text>
</comment>
<protein>
    <recommendedName>
        <fullName evidence="1">Anthranilate phosphoribosyltransferase</fullName>
        <ecNumber evidence="1">2.4.2.18</ecNumber>
    </recommendedName>
</protein>